<accession>Q479A9</accession>
<name>RPOZ_DECAR</name>
<gene>
    <name evidence="1" type="primary">rpoZ</name>
    <name type="ordered locus">Daro_3844</name>
</gene>
<evidence type="ECO:0000255" key="1">
    <source>
        <dbReference type="HAMAP-Rule" id="MF_00366"/>
    </source>
</evidence>
<organism>
    <name type="scientific">Dechloromonas aromatica (strain RCB)</name>
    <dbReference type="NCBI Taxonomy" id="159087"/>
    <lineage>
        <taxon>Bacteria</taxon>
        <taxon>Pseudomonadati</taxon>
        <taxon>Pseudomonadota</taxon>
        <taxon>Betaproteobacteria</taxon>
        <taxon>Rhodocyclales</taxon>
        <taxon>Azonexaceae</taxon>
        <taxon>Dechloromonas</taxon>
    </lineage>
</organism>
<sequence>MARVTVDDCLKRIPNRFQMTLAAAHRARQLANGATPLVDPEKHKPTVVALKEMGAGKVGLEVLNRGQA</sequence>
<feature type="chain" id="PRO_0000237451" description="DNA-directed RNA polymerase subunit omega">
    <location>
        <begin position="1"/>
        <end position="68"/>
    </location>
</feature>
<dbReference type="EC" id="2.7.7.6" evidence="1"/>
<dbReference type="EMBL" id="CP000089">
    <property type="protein sequence ID" value="AAZ48572.1"/>
    <property type="molecule type" value="Genomic_DNA"/>
</dbReference>
<dbReference type="SMR" id="Q479A9"/>
<dbReference type="STRING" id="159087.Daro_3844"/>
<dbReference type="KEGG" id="dar:Daro_3844"/>
<dbReference type="eggNOG" id="COG1758">
    <property type="taxonomic scope" value="Bacteria"/>
</dbReference>
<dbReference type="HOGENOM" id="CLU_125406_5_2_4"/>
<dbReference type="OrthoDB" id="9796300at2"/>
<dbReference type="GO" id="GO:0000428">
    <property type="term" value="C:DNA-directed RNA polymerase complex"/>
    <property type="evidence" value="ECO:0007669"/>
    <property type="project" value="UniProtKB-KW"/>
</dbReference>
<dbReference type="GO" id="GO:0003677">
    <property type="term" value="F:DNA binding"/>
    <property type="evidence" value="ECO:0007669"/>
    <property type="project" value="UniProtKB-UniRule"/>
</dbReference>
<dbReference type="GO" id="GO:0003899">
    <property type="term" value="F:DNA-directed RNA polymerase activity"/>
    <property type="evidence" value="ECO:0007669"/>
    <property type="project" value="UniProtKB-UniRule"/>
</dbReference>
<dbReference type="GO" id="GO:0006351">
    <property type="term" value="P:DNA-templated transcription"/>
    <property type="evidence" value="ECO:0007669"/>
    <property type="project" value="UniProtKB-UniRule"/>
</dbReference>
<dbReference type="Gene3D" id="3.90.940.10">
    <property type="match status" value="1"/>
</dbReference>
<dbReference type="HAMAP" id="MF_00366">
    <property type="entry name" value="RNApol_bact_RpoZ"/>
    <property type="match status" value="1"/>
</dbReference>
<dbReference type="InterPro" id="IPR003716">
    <property type="entry name" value="DNA-dir_RNA_pol_omega"/>
</dbReference>
<dbReference type="InterPro" id="IPR006110">
    <property type="entry name" value="Pol_omega/Rpo6/RPB6"/>
</dbReference>
<dbReference type="InterPro" id="IPR036161">
    <property type="entry name" value="RPB6/omega-like_sf"/>
</dbReference>
<dbReference type="NCBIfam" id="TIGR00690">
    <property type="entry name" value="rpoZ"/>
    <property type="match status" value="1"/>
</dbReference>
<dbReference type="PANTHER" id="PTHR34476">
    <property type="entry name" value="DNA-DIRECTED RNA POLYMERASE SUBUNIT OMEGA"/>
    <property type="match status" value="1"/>
</dbReference>
<dbReference type="PANTHER" id="PTHR34476:SF1">
    <property type="entry name" value="DNA-DIRECTED RNA POLYMERASE SUBUNIT OMEGA"/>
    <property type="match status" value="1"/>
</dbReference>
<dbReference type="Pfam" id="PF01192">
    <property type="entry name" value="RNA_pol_Rpb6"/>
    <property type="match status" value="1"/>
</dbReference>
<dbReference type="SMART" id="SM01409">
    <property type="entry name" value="RNA_pol_Rpb6"/>
    <property type="match status" value="1"/>
</dbReference>
<dbReference type="SUPFAM" id="SSF63562">
    <property type="entry name" value="RPB6/omega subunit-like"/>
    <property type="match status" value="1"/>
</dbReference>
<comment type="function">
    <text evidence="1">Promotes RNA polymerase assembly. Latches the N- and C-terminal regions of the beta' subunit thereby facilitating its interaction with the beta and alpha subunits.</text>
</comment>
<comment type="catalytic activity">
    <reaction evidence="1">
        <text>RNA(n) + a ribonucleoside 5'-triphosphate = RNA(n+1) + diphosphate</text>
        <dbReference type="Rhea" id="RHEA:21248"/>
        <dbReference type="Rhea" id="RHEA-COMP:14527"/>
        <dbReference type="Rhea" id="RHEA-COMP:17342"/>
        <dbReference type="ChEBI" id="CHEBI:33019"/>
        <dbReference type="ChEBI" id="CHEBI:61557"/>
        <dbReference type="ChEBI" id="CHEBI:140395"/>
        <dbReference type="EC" id="2.7.7.6"/>
    </reaction>
</comment>
<comment type="subunit">
    <text evidence="1">The RNAP catalytic core consists of 2 alpha, 1 beta, 1 beta' and 1 omega subunit. When a sigma factor is associated with the core the holoenzyme is formed, which can initiate transcription.</text>
</comment>
<comment type="similarity">
    <text evidence="1">Belongs to the RNA polymerase subunit omega family.</text>
</comment>
<reference key="1">
    <citation type="journal article" date="2009" name="BMC Genomics">
        <title>Metabolic analysis of the soil microbe Dechloromonas aromatica str. RCB: indications of a surprisingly complex life-style and cryptic anaerobic pathways for aromatic degradation.</title>
        <authorList>
            <person name="Salinero K.K."/>
            <person name="Keller K."/>
            <person name="Feil W.S."/>
            <person name="Feil H."/>
            <person name="Trong S."/>
            <person name="Di Bartolo G."/>
            <person name="Lapidus A."/>
        </authorList>
    </citation>
    <scope>NUCLEOTIDE SEQUENCE [LARGE SCALE GENOMIC DNA]</scope>
    <source>
        <strain>RCB</strain>
    </source>
</reference>
<keyword id="KW-0240">DNA-directed RNA polymerase</keyword>
<keyword id="KW-0548">Nucleotidyltransferase</keyword>
<keyword id="KW-0804">Transcription</keyword>
<keyword id="KW-0808">Transferase</keyword>
<proteinExistence type="inferred from homology"/>
<protein>
    <recommendedName>
        <fullName evidence="1">DNA-directed RNA polymerase subunit omega</fullName>
        <shortName evidence="1">RNAP omega subunit</shortName>
        <ecNumber evidence="1">2.7.7.6</ecNumber>
    </recommendedName>
    <alternativeName>
        <fullName evidence="1">RNA polymerase omega subunit</fullName>
    </alternativeName>
    <alternativeName>
        <fullName evidence="1">Transcriptase subunit omega</fullName>
    </alternativeName>
</protein>